<feature type="signal peptide" evidence="1">
    <location>
        <begin position="1"/>
        <end position="21"/>
    </location>
</feature>
<feature type="chain" id="PRO_0000022472" description="Target of Nesh-SH3">
    <location>
        <begin position="22"/>
        <end position="1068"/>
    </location>
</feature>
<feature type="domain" description="Fibronectin type-III 1" evidence="2">
    <location>
        <begin position="116"/>
        <end position="214"/>
    </location>
</feature>
<feature type="domain" description="Fibronectin type-III 2" evidence="2">
    <location>
        <begin position="833"/>
        <end position="926"/>
    </location>
</feature>
<feature type="region of interest" description="Disordered" evidence="3">
    <location>
        <begin position="315"/>
        <end position="351"/>
    </location>
</feature>
<feature type="region of interest" description="Disordered" evidence="3">
    <location>
        <begin position="384"/>
        <end position="811"/>
    </location>
</feature>
<feature type="compositionally biased region" description="Low complexity" evidence="3">
    <location>
        <begin position="326"/>
        <end position="339"/>
    </location>
</feature>
<feature type="compositionally biased region" description="Polar residues" evidence="3">
    <location>
        <begin position="340"/>
        <end position="351"/>
    </location>
</feature>
<feature type="compositionally biased region" description="Low complexity" evidence="3">
    <location>
        <begin position="447"/>
        <end position="462"/>
    </location>
</feature>
<feature type="compositionally biased region" description="Basic residues" evidence="3">
    <location>
        <begin position="463"/>
        <end position="473"/>
    </location>
</feature>
<feature type="compositionally biased region" description="Polar residues" evidence="3">
    <location>
        <begin position="482"/>
        <end position="499"/>
    </location>
</feature>
<feature type="compositionally biased region" description="Pro residues" evidence="3">
    <location>
        <begin position="532"/>
        <end position="544"/>
    </location>
</feature>
<feature type="compositionally biased region" description="Polar residues" evidence="3">
    <location>
        <begin position="562"/>
        <end position="574"/>
    </location>
</feature>
<feature type="compositionally biased region" description="Low complexity" evidence="3">
    <location>
        <begin position="603"/>
        <end position="631"/>
    </location>
</feature>
<feature type="compositionally biased region" description="Low complexity" evidence="3">
    <location>
        <begin position="737"/>
        <end position="750"/>
    </location>
</feature>
<feature type="compositionally biased region" description="Polar residues" evidence="3">
    <location>
        <begin position="802"/>
        <end position="811"/>
    </location>
</feature>
<feature type="glycosylation site" description="N-linked (GlcNAc...) asparagine" evidence="5">
    <location>
        <position position="37"/>
    </location>
</feature>
<feature type="splice variant" id="VSP_010860" description="In isoform 2." evidence="7 8">
    <location>
        <begin position="1"/>
        <end position="607"/>
    </location>
</feature>
<feature type="splice variant" id="VSP_061186" description="In isoform 3.">
    <original>MLSSLGCLLLCGSITLALGNAQKLPKGKRPNLKVHINTTSDSILLKFLRPSPNVKLEGLLLGYGSNVSPNQYFPLPAEGKFTEAIVDAEPKYLIVVRPAPPPSQKKSCSGKTRSRKPLQLVVGTLTPSSVFLSWGFLINPHHDWTLPSHCPNDRFYTIRYREKDKEKKWIFQICPATETIVENLKPNTVYEFGVKDNVEGGIWSKIFNHKTVVGSKKVNGKIQSTYDQDHTVPAYVPRKLIPITIIKQVIQNVTHKDSAKSPEKAPLGGVILVHLIIPGLNETTVKLPASLMFEISDALKTQLAKNETLALPAESKTPEVEKISARPTTVTPETVPRSTKPTTSSALDVSETTLASSEKPWIVPTAKISEDSKVLQPQTATYDVFSSPTTSDEPEISDSYTATSDRILDSIPPKTSRTLEQPRATLAPSETPFVPQKLEIFTSPEMQPTTPAPQQTTSIPSTPKRRPRPKPPRTKPERTTSAGTITPKISKSPEPTWTTPAPGKTQFISLKPKIPLSPEVTHTK</original>
    <variation>MTESLPVSDVLESVTLSTESPKETIAPAKTDYVYPTAKAPLWPEEPKTEVVESITYVSEPPETTLETSPLPSQSITLPSPDEPQTE</variation>
    <location>
        <begin position="1"/>
        <end position="524"/>
    </location>
</feature>
<feature type="splice variant" id="VSP_061187" description="In isoform 4.">
    <original>MLSSLGCLLLCGSITLALGNAQKLPKGKRPNLKVHINTTSDSILLKFLRPSPNVKLEGLLLGYGSNVSPNQYFPLPAEGKFTEAIVDAEPKYLIVVRPAPPPSQKKSCSGKTRSRKPLQLVVGTLTPSSVFLSWGFLINPHHDWTLPSHCPNDRFYTIRYREKDKEKKWIFQICPATETIVENLKPNTVYEFGVKDNVEGGIWSKIFNHKTVVGSKKVNGKIQSTYDQDHTVPAYVPRKLIPITIIKQVIQNVTHKDSAKSPEKAPLGGVILVHLIIPGLNETTVKLPASLMFEISDALKTQLAKNETLALPAESKTPEVEKISARPTTVTPETVPRSTKPTTSSALDVSETTLASSEKPWIVPTAKISEDSKVLQPQTATYDVFSSPTTSDEPEISDSYTATSDRILDSIPPKTSRTLEQPRATLAPSETPFVPQKLEIFTSPEMQPTTPAPQQTTSIPSTPKRRPRPKPPRTKPERTTSAGTITPKISKSPEPTWTTPAPGKTQFISLKPKIPLSPEVTHT</original>
    <variation>MTIVPTTDIEPVTVRTEATVTTLAPKTSQRTRTRRPRPKHKTTPRPETLQTKLDFGPITPGTSSAPTTTTKRTRRPHPKPKTTPHPEVPQTKLAPKVPQRTHRPHPKPKTTLSPEELQTELVPVTDLGPVTFRTEIPATTLATKTSKRTRPPRPRPKTTPSPQAPETKPVPATVLEPVTLRPEASTTLASKTSQRTRRPRLRTKTTPRPEAPES</variation>
    <location>
        <begin position="1"/>
        <end position="523"/>
    </location>
</feature>
<feature type="splice variant" id="VSP_010861" description="In isoform 2, isoform 3 and isoform 4." evidence="7 8">
    <original>P</original>
    <variation>PVLNRTTTRPTRPKPSGMPSGNGVGT</variation>
    <location>
        <position position="669"/>
    </location>
</feature>
<feature type="sequence variant" id="VAR_079855" description="Found in a patient with isolated coloboma; uncertain significance; dbSNP:rs2097140449." evidence="6">
    <original>D</original>
    <variation>G</variation>
    <location>
        <position position="663"/>
    </location>
</feature>
<accession>Q7Z7G0</accession>
<accession>B3KSL4</accession>
<accession>Q6ZW20</accession>
<accession>Q6ZW22</accession>
<accession>Q9C082</accession>
<accession>Q9UFI6</accession>
<keyword id="KW-0025">Alternative splicing</keyword>
<keyword id="KW-0225">Disease variant</keyword>
<keyword id="KW-0325">Glycoprotein</keyword>
<keyword id="KW-1267">Proteomics identification</keyword>
<keyword id="KW-1185">Reference proteome</keyword>
<keyword id="KW-0677">Repeat</keyword>
<keyword id="KW-0964">Secreted</keyword>
<keyword id="KW-0732">Signal</keyword>
<organism>
    <name type="scientific">Homo sapiens</name>
    <name type="common">Human</name>
    <dbReference type="NCBI Taxonomy" id="9606"/>
    <lineage>
        <taxon>Eukaryota</taxon>
        <taxon>Metazoa</taxon>
        <taxon>Chordata</taxon>
        <taxon>Craniata</taxon>
        <taxon>Vertebrata</taxon>
        <taxon>Euteleostomi</taxon>
        <taxon>Mammalia</taxon>
        <taxon>Eutheria</taxon>
        <taxon>Euarchontoglires</taxon>
        <taxon>Primates</taxon>
        <taxon>Haplorrhini</taxon>
        <taxon>Catarrhini</taxon>
        <taxon>Hominidae</taxon>
        <taxon>Homo</taxon>
    </lineage>
</organism>
<reference key="1">
    <citation type="journal article" date="2001" name="J. Hum. Genet.">
        <title>Cloning and sequencing of a novel human gene that encodes a putative target protein of Nesh-SH3.</title>
        <authorList>
            <person name="Matsuda S."/>
            <person name="Iriyama C."/>
            <person name="Yokozaki S."/>
            <person name="Ichigotani Y."/>
            <person name="Shirafuji N."/>
            <person name="Yamaki K."/>
            <person name="Hayakawa T."/>
            <person name="Hamaguchi M."/>
        </authorList>
    </citation>
    <scope>NUCLEOTIDE SEQUENCE [MRNA] (ISOFORM 2)</scope>
    <scope>TISSUE SPECIFICITY</scope>
    <source>
        <tissue>Placenta</tissue>
    </source>
</reference>
<reference key="2">
    <citation type="journal article" date="2004" name="Nat. Genet.">
        <title>Complete sequencing and characterization of 21,243 full-length human cDNAs.</title>
        <authorList>
            <person name="Ota T."/>
            <person name="Suzuki Y."/>
            <person name="Nishikawa T."/>
            <person name="Otsuki T."/>
            <person name="Sugiyama T."/>
            <person name="Irie R."/>
            <person name="Wakamatsu A."/>
            <person name="Hayashi K."/>
            <person name="Sato H."/>
            <person name="Nagai K."/>
            <person name="Kimura K."/>
            <person name="Makita H."/>
            <person name="Sekine M."/>
            <person name="Obayashi M."/>
            <person name="Nishi T."/>
            <person name="Shibahara T."/>
            <person name="Tanaka T."/>
            <person name="Ishii S."/>
            <person name="Yamamoto J."/>
            <person name="Saito K."/>
            <person name="Kawai Y."/>
            <person name="Isono Y."/>
            <person name="Nakamura Y."/>
            <person name="Nagahari K."/>
            <person name="Murakami K."/>
            <person name="Yasuda T."/>
            <person name="Iwayanagi T."/>
            <person name="Wagatsuma M."/>
            <person name="Shiratori A."/>
            <person name="Sudo H."/>
            <person name="Hosoiri T."/>
            <person name="Kaku Y."/>
            <person name="Kodaira H."/>
            <person name="Kondo H."/>
            <person name="Sugawara M."/>
            <person name="Takahashi M."/>
            <person name="Kanda K."/>
            <person name="Yokoi T."/>
            <person name="Furuya T."/>
            <person name="Kikkawa E."/>
            <person name="Omura Y."/>
            <person name="Abe K."/>
            <person name="Kamihara K."/>
            <person name="Katsuta N."/>
            <person name="Sato K."/>
            <person name="Tanikawa M."/>
            <person name="Yamazaki M."/>
            <person name="Ninomiya K."/>
            <person name="Ishibashi T."/>
            <person name="Yamashita H."/>
            <person name="Murakawa K."/>
            <person name="Fujimori K."/>
            <person name="Tanai H."/>
            <person name="Kimata M."/>
            <person name="Watanabe M."/>
            <person name="Hiraoka S."/>
            <person name="Chiba Y."/>
            <person name="Ishida S."/>
            <person name="Ono Y."/>
            <person name="Takiguchi S."/>
            <person name="Watanabe S."/>
            <person name="Yosida M."/>
            <person name="Hotuta T."/>
            <person name="Kusano J."/>
            <person name="Kanehori K."/>
            <person name="Takahashi-Fujii A."/>
            <person name="Hara H."/>
            <person name="Tanase T.-O."/>
            <person name="Nomura Y."/>
            <person name="Togiya S."/>
            <person name="Komai F."/>
            <person name="Hara R."/>
            <person name="Takeuchi K."/>
            <person name="Arita M."/>
            <person name="Imose N."/>
            <person name="Musashino K."/>
            <person name="Yuuki H."/>
            <person name="Oshima A."/>
            <person name="Sasaki N."/>
            <person name="Aotsuka S."/>
            <person name="Yoshikawa Y."/>
            <person name="Matsunawa H."/>
            <person name="Ichihara T."/>
            <person name="Shiohata N."/>
            <person name="Sano S."/>
            <person name="Moriya S."/>
            <person name="Momiyama H."/>
            <person name="Satoh N."/>
            <person name="Takami S."/>
            <person name="Terashima Y."/>
            <person name="Suzuki O."/>
            <person name="Nakagawa S."/>
            <person name="Senoh A."/>
            <person name="Mizoguchi H."/>
            <person name="Goto Y."/>
            <person name="Shimizu F."/>
            <person name="Wakebe H."/>
            <person name="Hishigaki H."/>
            <person name="Watanabe T."/>
            <person name="Sugiyama A."/>
            <person name="Takemoto M."/>
            <person name="Kawakami B."/>
            <person name="Yamazaki M."/>
            <person name="Watanabe K."/>
            <person name="Kumagai A."/>
            <person name="Itakura S."/>
            <person name="Fukuzumi Y."/>
            <person name="Fujimori Y."/>
            <person name="Komiyama M."/>
            <person name="Tashiro H."/>
            <person name="Tanigami A."/>
            <person name="Fujiwara T."/>
            <person name="Ono T."/>
            <person name="Yamada K."/>
            <person name="Fujii Y."/>
            <person name="Ozaki K."/>
            <person name="Hirao M."/>
            <person name="Ohmori Y."/>
            <person name="Kawabata A."/>
            <person name="Hikiji T."/>
            <person name="Kobatake N."/>
            <person name="Inagaki H."/>
            <person name="Ikema Y."/>
            <person name="Okamoto S."/>
            <person name="Okitani R."/>
            <person name="Kawakami T."/>
            <person name="Noguchi S."/>
            <person name="Itoh T."/>
            <person name="Shigeta K."/>
            <person name="Senba T."/>
            <person name="Matsumura K."/>
            <person name="Nakajima Y."/>
            <person name="Mizuno T."/>
            <person name="Morinaga M."/>
            <person name="Sasaki M."/>
            <person name="Togashi T."/>
            <person name="Oyama M."/>
            <person name="Hata H."/>
            <person name="Watanabe M."/>
            <person name="Komatsu T."/>
            <person name="Mizushima-Sugano J."/>
            <person name="Satoh T."/>
            <person name="Shirai Y."/>
            <person name="Takahashi Y."/>
            <person name="Nakagawa K."/>
            <person name="Okumura K."/>
            <person name="Nagase T."/>
            <person name="Nomura N."/>
            <person name="Kikuchi H."/>
            <person name="Masuho Y."/>
            <person name="Yamashita R."/>
            <person name="Nakai K."/>
            <person name="Yada T."/>
            <person name="Nakamura Y."/>
            <person name="Ohara O."/>
            <person name="Isogai T."/>
            <person name="Sugano S."/>
        </authorList>
    </citation>
    <scope>NUCLEOTIDE SEQUENCE [LARGE SCALE MRNA] (ISOFORMS 2; 3 AND 4)</scope>
    <source>
        <tissue>Trachea</tissue>
    </source>
</reference>
<reference key="3">
    <citation type="journal article" date="2006" name="Nature">
        <title>The DNA sequence, annotation and analysis of human chromosome 3.</title>
        <authorList>
            <person name="Muzny D.M."/>
            <person name="Scherer S.E."/>
            <person name="Kaul R."/>
            <person name="Wang J."/>
            <person name="Yu J."/>
            <person name="Sudbrak R."/>
            <person name="Buhay C.J."/>
            <person name="Chen R."/>
            <person name="Cree A."/>
            <person name="Ding Y."/>
            <person name="Dugan-Rocha S."/>
            <person name="Gill R."/>
            <person name="Gunaratne P."/>
            <person name="Harris R.A."/>
            <person name="Hawes A.C."/>
            <person name="Hernandez J."/>
            <person name="Hodgson A.V."/>
            <person name="Hume J."/>
            <person name="Jackson A."/>
            <person name="Khan Z.M."/>
            <person name="Kovar-Smith C."/>
            <person name="Lewis L.R."/>
            <person name="Lozado R.J."/>
            <person name="Metzker M.L."/>
            <person name="Milosavljevic A."/>
            <person name="Miner G.R."/>
            <person name="Morgan M.B."/>
            <person name="Nazareth L.V."/>
            <person name="Scott G."/>
            <person name="Sodergren E."/>
            <person name="Song X.-Z."/>
            <person name="Steffen D."/>
            <person name="Wei S."/>
            <person name="Wheeler D.A."/>
            <person name="Wright M.W."/>
            <person name="Worley K.C."/>
            <person name="Yuan Y."/>
            <person name="Zhang Z."/>
            <person name="Adams C.Q."/>
            <person name="Ansari-Lari M.A."/>
            <person name="Ayele M."/>
            <person name="Brown M.J."/>
            <person name="Chen G."/>
            <person name="Chen Z."/>
            <person name="Clendenning J."/>
            <person name="Clerc-Blankenburg K.P."/>
            <person name="Chen R."/>
            <person name="Chen Z."/>
            <person name="Davis C."/>
            <person name="Delgado O."/>
            <person name="Dinh H.H."/>
            <person name="Dong W."/>
            <person name="Draper H."/>
            <person name="Ernst S."/>
            <person name="Fu G."/>
            <person name="Gonzalez-Garay M.L."/>
            <person name="Garcia D.K."/>
            <person name="Gillett W."/>
            <person name="Gu J."/>
            <person name="Hao B."/>
            <person name="Haugen E."/>
            <person name="Havlak P."/>
            <person name="He X."/>
            <person name="Hennig S."/>
            <person name="Hu S."/>
            <person name="Huang W."/>
            <person name="Jackson L.R."/>
            <person name="Jacob L.S."/>
            <person name="Kelly S.H."/>
            <person name="Kube M."/>
            <person name="Levy R."/>
            <person name="Li Z."/>
            <person name="Liu B."/>
            <person name="Liu J."/>
            <person name="Liu W."/>
            <person name="Lu J."/>
            <person name="Maheshwari M."/>
            <person name="Nguyen B.-V."/>
            <person name="Okwuonu G.O."/>
            <person name="Palmeiri A."/>
            <person name="Pasternak S."/>
            <person name="Perez L.M."/>
            <person name="Phelps K.A."/>
            <person name="Plopper F.J."/>
            <person name="Qiang B."/>
            <person name="Raymond C."/>
            <person name="Rodriguez R."/>
            <person name="Saenphimmachak C."/>
            <person name="Santibanez J."/>
            <person name="Shen H."/>
            <person name="Shen Y."/>
            <person name="Subramanian S."/>
            <person name="Tabor P.E."/>
            <person name="Verduzco D."/>
            <person name="Waldron L."/>
            <person name="Wang J."/>
            <person name="Wang J."/>
            <person name="Wang Q."/>
            <person name="Williams G.A."/>
            <person name="Wong G.K.-S."/>
            <person name="Yao Z."/>
            <person name="Zhang J."/>
            <person name="Zhang X."/>
            <person name="Zhao G."/>
            <person name="Zhou J."/>
            <person name="Zhou Y."/>
            <person name="Nelson D."/>
            <person name="Lehrach H."/>
            <person name="Reinhardt R."/>
            <person name="Naylor S.L."/>
            <person name="Yang H."/>
            <person name="Olson M."/>
            <person name="Weinstock G."/>
            <person name="Gibbs R.A."/>
        </authorList>
    </citation>
    <scope>NUCLEOTIDE SEQUENCE [LARGE SCALE GENOMIC DNA]</scope>
</reference>
<reference key="4">
    <citation type="submission" date="2005-09" db="EMBL/GenBank/DDBJ databases">
        <authorList>
            <person name="Mural R.J."/>
            <person name="Istrail S."/>
            <person name="Sutton G.G."/>
            <person name="Florea L."/>
            <person name="Halpern A.L."/>
            <person name="Mobarry C.M."/>
            <person name="Lippert R."/>
            <person name="Walenz B."/>
            <person name="Shatkay H."/>
            <person name="Dew I."/>
            <person name="Miller J.R."/>
            <person name="Flanigan M.J."/>
            <person name="Edwards N.J."/>
            <person name="Bolanos R."/>
            <person name="Fasulo D."/>
            <person name="Halldorsson B.V."/>
            <person name="Hannenhalli S."/>
            <person name="Turner R."/>
            <person name="Yooseph S."/>
            <person name="Lu F."/>
            <person name="Nusskern D.R."/>
            <person name="Shue B.C."/>
            <person name="Zheng X.H."/>
            <person name="Zhong F."/>
            <person name="Delcher A.L."/>
            <person name="Huson D.H."/>
            <person name="Kravitz S.A."/>
            <person name="Mouchard L."/>
            <person name="Reinert K."/>
            <person name="Remington K.A."/>
            <person name="Clark A.G."/>
            <person name="Waterman M.S."/>
            <person name="Eichler E.E."/>
            <person name="Adams M.D."/>
            <person name="Hunkapiller M.W."/>
            <person name="Myers E.W."/>
            <person name="Venter J.C."/>
        </authorList>
    </citation>
    <scope>NUCLEOTIDE SEQUENCE [LARGE SCALE GENOMIC DNA]</scope>
</reference>
<reference key="5">
    <citation type="journal article" date="2004" name="Genome Res.">
        <title>The status, quality, and expansion of the NIH full-length cDNA project: the Mammalian Gene Collection (MGC).</title>
        <authorList>
            <consortium name="The MGC Project Team"/>
        </authorList>
    </citation>
    <scope>NUCLEOTIDE SEQUENCE [LARGE SCALE MRNA] (ISOFORM 1)</scope>
    <source>
        <tissue>Lung</tissue>
    </source>
</reference>
<reference key="6">
    <citation type="journal article" date="2007" name="BMC Genomics">
        <title>The full-ORF clone resource of the German cDNA consortium.</title>
        <authorList>
            <person name="Bechtel S."/>
            <person name="Rosenfelder H."/>
            <person name="Duda A."/>
            <person name="Schmidt C.P."/>
            <person name="Ernst U."/>
            <person name="Wellenreuther R."/>
            <person name="Mehrle A."/>
            <person name="Schuster C."/>
            <person name="Bahr A."/>
            <person name="Bloecker H."/>
            <person name="Heubner D."/>
            <person name="Hoerlein A."/>
            <person name="Michel G."/>
            <person name="Wedler H."/>
            <person name="Koehrer K."/>
            <person name="Ottenwaelder B."/>
            <person name="Poustka A."/>
            <person name="Wiemann S."/>
            <person name="Schupp I."/>
        </authorList>
    </citation>
    <scope>NUCLEOTIDE SEQUENCE [LARGE SCALE MRNA] OF 699-1068</scope>
    <source>
        <tissue>Uterus</tissue>
    </source>
</reference>
<reference key="7">
    <citation type="journal article" date="2009" name="J. Proteome Res.">
        <title>Glycoproteomics analysis of human liver tissue by combination of multiple enzyme digestion and hydrazide chemistry.</title>
        <authorList>
            <person name="Chen R."/>
            <person name="Jiang X."/>
            <person name="Sun D."/>
            <person name="Han G."/>
            <person name="Wang F."/>
            <person name="Ye M."/>
            <person name="Wang L."/>
            <person name="Zou H."/>
        </authorList>
    </citation>
    <scope>GLYCOSYLATION [LARGE SCALE ANALYSIS] AT ASN-37</scope>
    <source>
        <tissue>Liver</tissue>
    </source>
</reference>
<reference key="8">
    <citation type="journal article" date="2017" name="Hum. Mutat.">
        <title>A recurrent de novo mutation in ACTG1 causes isolated ocular coloboma.</title>
        <authorList>
            <consortium name="UK10K"/>
            <person name="Rainger J."/>
            <person name="Williamson K.A."/>
            <person name="Soares D.C."/>
            <person name="Truch J."/>
            <person name="Kurian D."/>
            <person name="Gillessen-Kaesbach G."/>
            <person name="Seawright A."/>
            <person name="Prendergast J."/>
            <person name="Halachev M."/>
            <person name="Wheeler A."/>
            <person name="McTeir L."/>
            <person name="Gill A.C."/>
            <person name="van Heyningen V."/>
            <person name="Davey M.G."/>
            <person name="FitzPatrick D.R."/>
        </authorList>
    </citation>
    <scope>VARIANT GLY-663</scope>
</reference>
<dbReference type="EMBL" id="AB056106">
    <property type="protein sequence ID" value="BAB32867.1"/>
    <property type="molecule type" value="mRNA"/>
</dbReference>
<dbReference type="EMBL" id="AK093861">
    <property type="protein sequence ID" value="BAG52776.1"/>
    <property type="molecule type" value="mRNA"/>
</dbReference>
<dbReference type="EMBL" id="AK123737">
    <property type="protein sequence ID" value="BAC85685.1"/>
    <property type="molecule type" value="mRNA"/>
</dbReference>
<dbReference type="EMBL" id="AK123748">
    <property type="protein sequence ID" value="BAC85687.1"/>
    <property type="molecule type" value="mRNA"/>
</dbReference>
<dbReference type="EMBL" id="AC068763">
    <property type="status" value="NOT_ANNOTATED_CDS"/>
    <property type="molecule type" value="Genomic_DNA"/>
</dbReference>
<dbReference type="EMBL" id="AC069223">
    <property type="status" value="NOT_ANNOTATED_CDS"/>
    <property type="molecule type" value="Genomic_DNA"/>
</dbReference>
<dbReference type="EMBL" id="AC080014">
    <property type="status" value="NOT_ANNOTATED_CDS"/>
    <property type="molecule type" value="Genomic_DNA"/>
</dbReference>
<dbReference type="EMBL" id="AC093009">
    <property type="status" value="NOT_ANNOTATED_CDS"/>
    <property type="molecule type" value="Genomic_DNA"/>
</dbReference>
<dbReference type="EMBL" id="AC106721">
    <property type="status" value="NOT_ANNOTATED_CDS"/>
    <property type="molecule type" value="Genomic_DNA"/>
</dbReference>
<dbReference type="EMBL" id="CH471052">
    <property type="protein sequence ID" value="EAW79811.1"/>
    <property type="molecule type" value="Genomic_DNA"/>
</dbReference>
<dbReference type="EMBL" id="BC030221">
    <property type="protein sequence ID" value="AAH30221.1"/>
    <property type="status" value="ALT_INIT"/>
    <property type="molecule type" value="mRNA"/>
</dbReference>
<dbReference type="EMBL" id="AL117664">
    <property type="protein sequence ID" value="CAB56034.1"/>
    <property type="status" value="ALT_INIT"/>
    <property type="molecule type" value="mRNA"/>
</dbReference>
<dbReference type="CCDS" id="CCDS46880.2">
    <molecule id="Q7Z7G0-1"/>
</dbReference>
<dbReference type="PIR" id="T17344">
    <property type="entry name" value="T17344"/>
</dbReference>
<dbReference type="RefSeq" id="NP_056244.2">
    <molecule id="Q7Z7G0-1"/>
    <property type="nucleotide sequence ID" value="NM_015429.3"/>
</dbReference>
<dbReference type="SMR" id="Q7Z7G0"/>
<dbReference type="BioGRID" id="117399">
    <property type="interactions" value="12"/>
</dbReference>
<dbReference type="FunCoup" id="Q7Z7G0">
    <property type="interactions" value="334"/>
</dbReference>
<dbReference type="IntAct" id="Q7Z7G0">
    <property type="interactions" value="7"/>
</dbReference>
<dbReference type="STRING" id="9606.ENSP00000284322"/>
<dbReference type="GlyConnect" id="1785">
    <property type="glycosylation" value="25 N-Linked glycans (6 sites)"/>
</dbReference>
<dbReference type="GlyCosmos" id="Q7Z7G0">
    <property type="glycosylation" value="7 sites, 24 glycans"/>
</dbReference>
<dbReference type="GlyGen" id="Q7Z7G0">
    <property type="glycosylation" value="2 sites, 31 N-linked glycans (1 site)"/>
</dbReference>
<dbReference type="iPTMnet" id="Q7Z7G0"/>
<dbReference type="PhosphoSitePlus" id="Q7Z7G0"/>
<dbReference type="BioMuta" id="ABI3BP"/>
<dbReference type="DMDM" id="50401533"/>
<dbReference type="jPOST" id="Q7Z7G0"/>
<dbReference type="MassIVE" id="Q7Z7G0"/>
<dbReference type="PaxDb" id="9606-ENSP00000284322"/>
<dbReference type="PeptideAtlas" id="Q7Z7G0"/>
<dbReference type="ProteomicsDB" id="69533">
    <molecule id="Q7Z7G0-1"/>
</dbReference>
<dbReference type="ProteomicsDB" id="69534">
    <molecule id="Q7Z7G0-2"/>
</dbReference>
<dbReference type="ProteomicsDB" id="69535">
    <molecule id="Q7Z7G0-3"/>
</dbReference>
<dbReference type="ProteomicsDB" id="69536">
    <molecule id="Q7Z7G0-4"/>
</dbReference>
<dbReference type="Antibodypedia" id="32245">
    <property type="antibodies" value="215 antibodies from 26 providers"/>
</dbReference>
<dbReference type="DNASU" id="25890"/>
<dbReference type="Ensembl" id="ENST00000284322.10">
    <molecule id="Q7Z7G0-1"/>
    <property type="protein sequence ID" value="ENSP00000284322.6"/>
    <property type="gene ID" value="ENSG00000154175.19"/>
</dbReference>
<dbReference type="GeneID" id="25890"/>
<dbReference type="KEGG" id="hsa:25890"/>
<dbReference type="UCSC" id="uc003dun.4">
    <molecule id="Q7Z7G0-1"/>
    <property type="organism name" value="human"/>
</dbReference>
<dbReference type="AGR" id="HGNC:17265"/>
<dbReference type="CTD" id="25890"/>
<dbReference type="DisGeNET" id="25890"/>
<dbReference type="GeneCards" id="ABI3BP"/>
<dbReference type="HGNC" id="HGNC:17265">
    <property type="gene designation" value="ABI3BP"/>
</dbReference>
<dbReference type="HPA" id="ENSG00000154175">
    <property type="expression patterns" value="Low tissue specificity"/>
</dbReference>
<dbReference type="MIM" id="606279">
    <property type="type" value="gene"/>
</dbReference>
<dbReference type="neXtProt" id="NX_Q7Z7G0"/>
<dbReference type="OpenTargets" id="ENSG00000154175"/>
<dbReference type="PharmGKB" id="PA134977769"/>
<dbReference type="VEuPathDB" id="HostDB:ENSG00000154175"/>
<dbReference type="eggNOG" id="ENOG502QRV7">
    <property type="taxonomic scope" value="Eukaryota"/>
</dbReference>
<dbReference type="GeneTree" id="ENSGT00530000063558"/>
<dbReference type="HOGENOM" id="CLU_004059_0_0_1"/>
<dbReference type="InParanoid" id="Q7Z7G0"/>
<dbReference type="OrthoDB" id="6129306at2759"/>
<dbReference type="PAN-GO" id="Q7Z7G0">
    <property type="GO annotations" value="3 GO annotations based on evolutionary models"/>
</dbReference>
<dbReference type="PhylomeDB" id="Q7Z7G0"/>
<dbReference type="TreeFam" id="TF331037"/>
<dbReference type="PathwayCommons" id="Q7Z7G0"/>
<dbReference type="SignaLink" id="Q7Z7G0"/>
<dbReference type="BioGRID-ORCS" id="25890">
    <property type="hits" value="12 hits in 1144 CRISPR screens"/>
</dbReference>
<dbReference type="ChiTaRS" id="ABI3BP">
    <property type="organism name" value="human"/>
</dbReference>
<dbReference type="GenomeRNAi" id="25890"/>
<dbReference type="Pharos" id="Q7Z7G0">
    <property type="development level" value="Tbio"/>
</dbReference>
<dbReference type="PRO" id="PR:Q7Z7G0"/>
<dbReference type="Proteomes" id="UP000005640">
    <property type="component" value="Chromosome 3"/>
</dbReference>
<dbReference type="RNAct" id="Q7Z7G0">
    <property type="molecule type" value="protein"/>
</dbReference>
<dbReference type="Bgee" id="ENSG00000154175">
    <property type="expression patterns" value="Expressed in decidua and 172 other cell types or tissues"/>
</dbReference>
<dbReference type="ExpressionAtlas" id="Q7Z7G0">
    <property type="expression patterns" value="baseline and differential"/>
</dbReference>
<dbReference type="GO" id="GO:0062023">
    <property type="term" value="C:collagen-containing extracellular matrix"/>
    <property type="evidence" value="ECO:0007005"/>
    <property type="project" value="BHF-UCL"/>
</dbReference>
<dbReference type="GO" id="GO:0005576">
    <property type="term" value="C:extracellular region"/>
    <property type="evidence" value="ECO:0007005"/>
    <property type="project" value="BHF-UCL"/>
</dbReference>
<dbReference type="GO" id="GO:0005615">
    <property type="term" value="C:extracellular space"/>
    <property type="evidence" value="ECO:0007005"/>
    <property type="project" value="BHF-UCL"/>
</dbReference>
<dbReference type="GO" id="GO:0030198">
    <property type="term" value="P:extracellular matrix organization"/>
    <property type="evidence" value="ECO:0000318"/>
    <property type="project" value="GO_Central"/>
</dbReference>
<dbReference type="GO" id="GO:0010811">
    <property type="term" value="P:positive regulation of cell-substrate adhesion"/>
    <property type="evidence" value="ECO:0000318"/>
    <property type="project" value="GO_Central"/>
</dbReference>
<dbReference type="CDD" id="cd00063">
    <property type="entry name" value="FN3"/>
    <property type="match status" value="2"/>
</dbReference>
<dbReference type="FunFam" id="2.60.40.10:FF:000292">
    <property type="entry name" value="Target of Nesh-SH3 isoform 1"/>
    <property type="match status" value="1"/>
</dbReference>
<dbReference type="FunFam" id="2.60.40.10:FF:000288">
    <property type="entry name" value="target of Nesh-SH3 isoform X5"/>
    <property type="match status" value="1"/>
</dbReference>
<dbReference type="Gene3D" id="2.60.40.10">
    <property type="entry name" value="Immunoglobulins"/>
    <property type="match status" value="2"/>
</dbReference>
<dbReference type="InterPro" id="IPR003961">
    <property type="entry name" value="FN3_dom"/>
</dbReference>
<dbReference type="InterPro" id="IPR036116">
    <property type="entry name" value="FN3_sf"/>
</dbReference>
<dbReference type="InterPro" id="IPR013783">
    <property type="entry name" value="Ig-like_fold"/>
</dbReference>
<dbReference type="InterPro" id="IPR049109">
    <property type="entry name" value="TARSH/FNDC1_C"/>
</dbReference>
<dbReference type="PANTHER" id="PTHR23197:SF10">
    <property type="entry name" value="TARGET OF NESH-SH3"/>
    <property type="match status" value="1"/>
</dbReference>
<dbReference type="PANTHER" id="PTHR23197">
    <property type="entry name" value="TARSH-RELATED FIBRONECTIN DOMAIN-CONTAINING"/>
    <property type="match status" value="1"/>
</dbReference>
<dbReference type="Pfam" id="PF00041">
    <property type="entry name" value="fn3"/>
    <property type="match status" value="1"/>
</dbReference>
<dbReference type="Pfam" id="PF21731">
    <property type="entry name" value="TARSH_C"/>
    <property type="match status" value="1"/>
</dbReference>
<dbReference type="PRINTS" id="PR01217">
    <property type="entry name" value="PRICHEXTENSN"/>
</dbReference>
<dbReference type="SMART" id="SM00060">
    <property type="entry name" value="FN3"/>
    <property type="match status" value="2"/>
</dbReference>
<dbReference type="SUPFAM" id="SSF49265">
    <property type="entry name" value="Fibronectin type III"/>
    <property type="match status" value="2"/>
</dbReference>
<dbReference type="PROSITE" id="PS50853">
    <property type="entry name" value="FN3"/>
    <property type="match status" value="2"/>
</dbReference>
<protein>
    <recommendedName>
        <fullName evidence="9">Target of Nesh-SH3</fullName>
        <shortName>Tarsh</shortName>
    </recommendedName>
    <alternativeName>
        <fullName>ABI gene family member 3-binding protein</fullName>
    </alternativeName>
    <alternativeName>
        <fullName>Nesh-binding protein</fullName>
        <shortName>NeshBP</shortName>
    </alternativeName>
</protein>
<evidence type="ECO:0000255" key="1"/>
<evidence type="ECO:0000255" key="2">
    <source>
        <dbReference type="PROSITE-ProRule" id="PRU00316"/>
    </source>
</evidence>
<evidence type="ECO:0000256" key="3">
    <source>
        <dbReference type="SAM" id="MobiDB-lite"/>
    </source>
</evidence>
<evidence type="ECO:0000269" key="4">
    <source>
    </source>
</evidence>
<evidence type="ECO:0000269" key="5">
    <source>
    </source>
</evidence>
<evidence type="ECO:0000269" key="6">
    <source>
    </source>
</evidence>
<evidence type="ECO:0000303" key="7">
    <source>
    </source>
</evidence>
<evidence type="ECO:0000303" key="8">
    <source>
    </source>
</evidence>
<evidence type="ECO:0000305" key="9"/>
<evidence type="ECO:0000312" key="10">
    <source>
        <dbReference type="HGNC" id="HGNC:17265"/>
    </source>
</evidence>
<proteinExistence type="evidence at protein level"/>
<comment type="subunit">
    <text>Probably interacts with ABI3.</text>
</comment>
<comment type="subcellular location">
    <subcellularLocation>
        <location evidence="9">Secreted</location>
    </subcellularLocation>
</comment>
<comment type="alternative products">
    <event type="alternative splicing"/>
    <isoform>
        <id>Q7Z7G0-1</id>
        <name>1</name>
        <sequence type="displayed"/>
    </isoform>
    <isoform>
        <id>Q7Z7G0-2</id>
        <name>2</name>
        <sequence type="described" ref="VSP_010860 VSP_010861"/>
    </isoform>
    <isoform>
        <id>Q7Z7G0-3</id>
        <name>3</name>
        <sequence type="described" ref="VSP_061186 VSP_010861"/>
    </isoform>
    <isoform>
        <id>Q7Z7G0-4</id>
        <name>4</name>
        <sequence type="described" ref="VSP_061187 VSP_010861"/>
    </isoform>
</comment>
<comment type="tissue specificity">
    <text evidence="4">Expressed in brain, heart, lung, liver, pancreas kidney and placenta.</text>
</comment>
<comment type="disease">
    <text evidence="6">Defects in ABI3BP has been found in a patient with isolated coloboma, a defect of the eye characterized by the absence of ocular structures due to abnormal morphogenesis of the optic cup and stalk, and the fusion of the fetal fissure (optic fissure). Isolated colobomas may be associated with an abnormally small eye (microphthalmia) or small cornea.</text>
</comment>
<comment type="sequence caution" evidence="9">
    <conflict type="erroneous initiation">
        <sequence resource="EMBL-CDS" id="AAH30221"/>
    </conflict>
    <text>Extended N-terminus.</text>
</comment>
<comment type="sequence caution" evidence="9">
    <conflict type="erroneous initiation">
        <sequence resource="EMBL-CDS" id="CAB56034"/>
    </conflict>
    <text>Extended N-terminus.</text>
</comment>
<name>TARSH_HUMAN</name>
<sequence length="1068" mass="117895">MLSSLGCLLLCGSITLALGNAQKLPKGKRPNLKVHINTTSDSILLKFLRPSPNVKLEGLLLGYGSNVSPNQYFPLPAEGKFTEAIVDAEPKYLIVVRPAPPPSQKKSCSGKTRSRKPLQLVVGTLTPSSVFLSWGFLINPHHDWTLPSHCPNDRFYTIRYREKDKEKKWIFQICPATETIVENLKPNTVYEFGVKDNVEGGIWSKIFNHKTVVGSKKVNGKIQSTYDQDHTVPAYVPRKLIPITIIKQVIQNVTHKDSAKSPEKAPLGGVILVHLIIPGLNETTVKLPASLMFEISDALKTQLAKNETLALPAESKTPEVEKISARPTTVTPETVPRSTKPTTSSALDVSETTLASSEKPWIVPTAKISEDSKVLQPQTATYDVFSSPTTSDEPEISDSYTATSDRILDSIPPKTSRTLEQPRATLAPSETPFVPQKLEIFTSPEMQPTTPAPQQTTSIPSTPKRRPRPKPPRTKPERTTSAGTITPKISKSPEPTWTTPAPGKTQFISLKPKIPLSPEVTHTKPAPKQTPRAPPKPKTSPRPRIPQTQPVPKVPQRVTAKPKTSPSPEVSYTTPAPKDVLLPHKPYPEVSQSEPAPLETRGIPFIPMISPSPSQEELQTTLEETDQSTQEPFTTKIPRTTELAKTTQAPHRFYTTVRPRTSDKPHIRPGVKQAPRPSGADRNVSVDSTHPTKKPGTRRPPLPPRPTHPRRKPLPPNNVTGKPGSAGIISSGPITTPPLRSTPRPTGTPLERIETDIKQPTVPASGEELENITDFSSSPTRETDPLGKPRFKGPHVRYIQKPDNSPCSITDSVKRFPKEEATEGNATSPPQNPPTNLTVVTVEGCPSFVILDWEKPLNDTVTEYEVISRENGSFSGKNKSIQMTNQTFSTVENLKPNTSYEFQVKPKNPLGEGPVSNTVAFSTESADPRVSEPVSAGRDAIWTERPFNSDSYSECKGKQYVKRTWYKKFVGVQLCNSLRYKIYLSDSLTGKFYNIGDQRGHGEDHCQFVDSFLDGRTGQQLTSDQLPIKEGYFRAVRQEPVQFGEIGGHTQINYVQWYECGTTIPGKW</sequence>
<gene>
    <name evidence="10" type="primary">ABI3BP</name>
    <name type="synonym">NESHBP</name>
    <name type="synonym">TARSH</name>
</gene>